<accession>O28790</accession>
<name>Y1482_ARCFU</name>
<gene>
    <name type="ordered locus">AF_1482</name>
</gene>
<reference key="1">
    <citation type="journal article" date="1997" name="Nature">
        <title>The complete genome sequence of the hyperthermophilic, sulphate-reducing archaeon Archaeoglobus fulgidus.</title>
        <authorList>
            <person name="Klenk H.-P."/>
            <person name="Clayton R.A."/>
            <person name="Tomb J.-F."/>
            <person name="White O."/>
            <person name="Nelson K.E."/>
            <person name="Ketchum K.A."/>
            <person name="Dodson R.J."/>
            <person name="Gwinn M.L."/>
            <person name="Hickey E.K."/>
            <person name="Peterson J.D."/>
            <person name="Richardson D.L."/>
            <person name="Kerlavage A.R."/>
            <person name="Graham D.E."/>
            <person name="Kyrpides N.C."/>
            <person name="Fleischmann R.D."/>
            <person name="Quackenbush J."/>
            <person name="Lee N.H."/>
            <person name="Sutton G.G."/>
            <person name="Gill S.R."/>
            <person name="Kirkness E.F."/>
            <person name="Dougherty B.A."/>
            <person name="McKenney K."/>
            <person name="Adams M.D."/>
            <person name="Loftus B.J."/>
            <person name="Peterson S.N."/>
            <person name="Reich C.I."/>
            <person name="McNeil L.K."/>
            <person name="Badger J.H."/>
            <person name="Glodek A."/>
            <person name="Zhou L."/>
            <person name="Overbeek R."/>
            <person name="Gocayne J.D."/>
            <person name="Weidman J.F."/>
            <person name="McDonald L.A."/>
            <person name="Utterback T.R."/>
            <person name="Cotton M.D."/>
            <person name="Spriggs T."/>
            <person name="Artiach P."/>
            <person name="Kaine B.P."/>
            <person name="Sykes S.M."/>
            <person name="Sadow P.W."/>
            <person name="D'Andrea K.P."/>
            <person name="Bowman C."/>
            <person name="Fujii C."/>
            <person name="Garland S.A."/>
            <person name="Mason T.M."/>
            <person name="Olsen G.J."/>
            <person name="Fraser C.M."/>
            <person name="Smith H.O."/>
            <person name="Woese C.R."/>
            <person name="Venter J.C."/>
        </authorList>
    </citation>
    <scope>NUCLEOTIDE SEQUENCE [LARGE SCALE GENOMIC DNA]</scope>
    <source>
        <strain>ATCC 49558 / DSM 4304 / JCM 9628 / NBRC 100126 / VC-16</strain>
    </source>
</reference>
<organism>
    <name type="scientific">Archaeoglobus fulgidus (strain ATCC 49558 / DSM 4304 / JCM 9628 / NBRC 100126 / VC-16)</name>
    <dbReference type="NCBI Taxonomy" id="224325"/>
    <lineage>
        <taxon>Archaea</taxon>
        <taxon>Methanobacteriati</taxon>
        <taxon>Methanobacteriota</taxon>
        <taxon>Archaeoglobi</taxon>
        <taxon>Archaeoglobales</taxon>
        <taxon>Archaeoglobaceae</taxon>
        <taxon>Archaeoglobus</taxon>
    </lineage>
</organism>
<dbReference type="EMBL" id="AE000782">
    <property type="protein sequence ID" value="AAB89770.1"/>
    <property type="molecule type" value="Genomic_DNA"/>
</dbReference>
<dbReference type="PIR" id="A69435">
    <property type="entry name" value="A69435"/>
</dbReference>
<dbReference type="STRING" id="224325.AF_1482"/>
<dbReference type="PaxDb" id="224325-AF_1482"/>
<dbReference type="EnsemblBacteria" id="AAB89770">
    <property type="protein sequence ID" value="AAB89770"/>
    <property type="gene ID" value="AF_1482"/>
</dbReference>
<dbReference type="KEGG" id="afu:AF_1482"/>
<dbReference type="HOGENOM" id="CLU_2504776_0_0_2"/>
<dbReference type="Proteomes" id="UP000002199">
    <property type="component" value="Chromosome"/>
</dbReference>
<dbReference type="GO" id="GO:0005886">
    <property type="term" value="C:plasma membrane"/>
    <property type="evidence" value="ECO:0007669"/>
    <property type="project" value="UniProtKB-SubCell"/>
</dbReference>
<feature type="chain" id="PRO_0000128009" description="Uncharacterized protein AF_1482">
    <location>
        <begin position="1"/>
        <end position="85"/>
    </location>
</feature>
<feature type="transmembrane region" description="Helical" evidence="1">
    <location>
        <begin position="12"/>
        <end position="34"/>
    </location>
</feature>
<feature type="transmembrane region" description="Helical" evidence="1">
    <location>
        <begin position="49"/>
        <end position="71"/>
    </location>
</feature>
<proteinExistence type="predicted"/>
<sequence length="85" mass="9864">MDTSELERRAKICLSVVTFSTSYSLDAGVVVLAFLGIQRFRRSSKGAKIPEFLWVTWQSFIKVLSLLNGFVQHQKRYIFIRVCIY</sequence>
<protein>
    <recommendedName>
        <fullName>Uncharacterized protein AF_1482</fullName>
    </recommendedName>
</protein>
<keyword id="KW-1003">Cell membrane</keyword>
<keyword id="KW-0472">Membrane</keyword>
<keyword id="KW-1185">Reference proteome</keyword>
<keyword id="KW-0812">Transmembrane</keyword>
<keyword id="KW-1133">Transmembrane helix</keyword>
<comment type="subcellular location">
    <subcellularLocation>
        <location evidence="2">Cell membrane</location>
        <topology evidence="2">Multi-pass membrane protein</topology>
    </subcellularLocation>
</comment>
<evidence type="ECO:0000255" key="1"/>
<evidence type="ECO:0000305" key="2"/>